<keyword id="KW-0903">Direct protein sequencing</keyword>
<keyword id="KW-1015">Disulfide bond</keyword>
<keyword id="KW-0872">Ion channel impairing toxin</keyword>
<keyword id="KW-0528">Neurotoxin</keyword>
<keyword id="KW-0632">Potassium channel impairing toxin</keyword>
<keyword id="KW-0964">Secreted</keyword>
<keyword id="KW-0800">Toxin</keyword>
<keyword id="KW-1220">Voltage-gated potassium channel impairing toxin</keyword>
<organism>
    <name type="scientific">Centruroides bonito</name>
    <name type="common">Scorpion</name>
    <dbReference type="NCBI Taxonomy" id="3035065"/>
    <lineage>
        <taxon>Eukaryota</taxon>
        <taxon>Metazoa</taxon>
        <taxon>Ecdysozoa</taxon>
        <taxon>Arthropoda</taxon>
        <taxon>Chelicerata</taxon>
        <taxon>Arachnida</taxon>
        <taxon>Scorpiones</taxon>
        <taxon>Buthida</taxon>
        <taxon>Buthoidea</taxon>
        <taxon>Buthidae</taxon>
        <taxon>Centruroides</taxon>
    </lineage>
</organism>
<accession>C0HM73</accession>
<protein>
    <recommendedName>
        <fullName evidence="3">Potassium channel toxin alpha-KTx 10.5</fullName>
    </recommendedName>
    <alternativeName>
        <fullName evidence="3">CboK1</fullName>
    </alternativeName>
    <alternativeName>
        <fullName>Toxin II.10.4</fullName>
    </alternativeName>
</protein>
<name>KA104_CENBO</name>
<comment type="function">
    <text evidence="2">Inhibits less than 5% of human voltage-gated potassium (Kv) channel Kv1.3/KCNA3 currents at 100nM concentration and does not block human Kv1.1/KCNA1 and Kv1.2/KCNA2 currents.</text>
</comment>
<comment type="subcellular location">
    <subcellularLocation>
        <location evidence="2">Secreted</location>
    </subcellularLocation>
</comment>
<comment type="tissue specificity">
    <text evidence="5">Expressed by the venom gland.</text>
</comment>
<comment type="domain">
    <text evidence="4">Has the structural arrangement of an alpha-helix connected to antiparallel beta-sheets by disulfide bonds (CS-alpha/beta).</text>
</comment>
<comment type="mass spectrometry" mass="3765.1" method="Electrospray" evidence="2"/>
<comment type="similarity">
    <text evidence="4">Belongs to the short scorpion toxin superfamily. Potassium channel inhibitor family. Alpha-KTx 10 subfamily.</text>
</comment>
<sequence length="33" mass="3773">NVACVHRTCDSNCKRNGYKSGKCINRKCNCYPH</sequence>
<dbReference type="SMR" id="C0HM73"/>
<dbReference type="GO" id="GO:0005576">
    <property type="term" value="C:extracellular region"/>
    <property type="evidence" value="ECO:0007669"/>
    <property type="project" value="UniProtKB-SubCell"/>
</dbReference>
<dbReference type="GO" id="GO:0008200">
    <property type="term" value="F:ion channel inhibitor activity"/>
    <property type="evidence" value="ECO:0007669"/>
    <property type="project" value="InterPro"/>
</dbReference>
<dbReference type="GO" id="GO:0015459">
    <property type="term" value="F:potassium channel regulator activity"/>
    <property type="evidence" value="ECO:0007669"/>
    <property type="project" value="UniProtKB-KW"/>
</dbReference>
<dbReference type="GO" id="GO:0090729">
    <property type="term" value="F:toxin activity"/>
    <property type="evidence" value="ECO:0007669"/>
    <property type="project" value="UniProtKB-KW"/>
</dbReference>
<dbReference type="Gene3D" id="3.30.30.10">
    <property type="entry name" value="Knottin, scorpion toxin-like"/>
    <property type="match status" value="1"/>
</dbReference>
<dbReference type="InterPro" id="IPR036574">
    <property type="entry name" value="Scorpion_toxin-like_sf"/>
</dbReference>
<dbReference type="InterPro" id="IPR001947">
    <property type="entry name" value="Scorpion_toxinS_K_inh"/>
</dbReference>
<dbReference type="Pfam" id="PF00451">
    <property type="entry name" value="Toxin_2"/>
    <property type="match status" value="1"/>
</dbReference>
<dbReference type="SUPFAM" id="SSF57095">
    <property type="entry name" value="Scorpion toxin-like"/>
    <property type="match status" value="1"/>
</dbReference>
<feature type="chain" id="PRO_0000459533" description="Potassium channel toxin alpha-KTx 10.5">
    <location>
        <begin position="1"/>
        <end position="33"/>
    </location>
</feature>
<feature type="site" description="Basic residue of the functional dyad" evidence="1">
    <location>
        <position position="22"/>
    </location>
</feature>
<feature type="site" description="Aromatic residue of the functional dyad" evidence="1">
    <location>
        <position position="31"/>
    </location>
</feature>
<feature type="disulfide bond" evidence="1">
    <location>
        <begin position="4"/>
        <end position="23"/>
    </location>
</feature>
<feature type="disulfide bond" evidence="1">
    <location>
        <begin position="9"/>
        <end position="28"/>
    </location>
</feature>
<feature type="disulfide bond" evidence="1">
    <location>
        <begin position="13"/>
        <end position="30"/>
    </location>
</feature>
<feature type="non-terminal residue" evidence="3">
    <location>
        <position position="33"/>
    </location>
</feature>
<proteinExistence type="evidence at protein level"/>
<evidence type="ECO:0000250" key="1">
    <source>
        <dbReference type="UniProtKB" id="O46028"/>
    </source>
</evidence>
<evidence type="ECO:0000269" key="2">
    <source>
    </source>
</evidence>
<evidence type="ECO:0000303" key="3">
    <source>
    </source>
</evidence>
<evidence type="ECO:0000305" key="4"/>
<evidence type="ECO:0000305" key="5">
    <source>
    </source>
</evidence>
<reference evidence="4" key="1">
    <citation type="journal article" date="2023" name="Toxins">
        <title>Of Seven New K+ Channel Inhibitor Peptides of Centruroides bonito, alpha-KTx 2.24 Has a Picomolar Affinity for Kv1.2.</title>
        <authorList>
            <person name="Shakeel K."/>
            <person name="Olamendi-Portugal T."/>
            <person name="Naseem M.U."/>
            <person name="Becerril B."/>
            <person name="Zamudio F.Z."/>
            <person name="Delgado-Prudencio G."/>
            <person name="Possani L.D."/>
            <person name="Panyi G."/>
        </authorList>
    </citation>
    <scope>PROTEIN SEQUENCE</scope>
    <scope>FUNCTION</scope>
    <scope>SUBCELLULAR LOCATION</scope>
    <scope>TISSUE SPECIFICITY</scope>
    <scope>MASS SPECTROMETRY</scope>
</reference>